<feature type="chain" id="PRO_0000125505" description="Protein Vpu">
    <location>
        <begin position="1"/>
        <end position="166"/>
    </location>
</feature>
<reference key="1">
    <citation type="journal article" date="1992" name="J. Virol.">
        <title>Nucleotide sequence of the jaagsiekte retrovirus, an exogenous and endogenous type D and B retrovirus of sheep and goats.</title>
        <authorList>
            <person name="York D.F."/>
            <person name="Vigne R."/>
            <person name="Verwoerd D.W."/>
            <person name="Querat G."/>
        </authorList>
    </citation>
    <scope>NUCLEOTIDE SEQUENCE [GENOMIC RNA]</scope>
</reference>
<organism>
    <name type="scientific">Sheep pulmonary adenomatosis virus</name>
    <name type="common">Jaagsiekte sheep retrovirus</name>
    <name type="synonym">JSRV</name>
    <dbReference type="NCBI Taxonomy" id="11746"/>
    <lineage>
        <taxon>Viruses</taxon>
        <taxon>Riboviria</taxon>
        <taxon>Pararnavirae</taxon>
        <taxon>Artverviricota</taxon>
        <taxon>Revtraviricetes</taxon>
        <taxon>Ortervirales</taxon>
        <taxon>Retroviridae</taxon>
        <taxon>Orthoretrovirinae</taxon>
        <taxon>Betaretrovirus</taxon>
    </lineage>
</organism>
<organismHost>
    <name type="scientific">Ovis aries</name>
    <name type="common">Sheep</name>
    <dbReference type="NCBI Taxonomy" id="9940"/>
</organismHost>
<dbReference type="EMBL" id="M80216">
    <property type="protein sequence ID" value="AAA89183.1"/>
    <property type="molecule type" value="Genomic_RNA"/>
</dbReference>
<dbReference type="PIR" id="D42740">
    <property type="entry name" value="ASMVJA"/>
</dbReference>
<dbReference type="Proteomes" id="UP000007215">
    <property type="component" value="Genome"/>
</dbReference>
<dbReference type="InterPro" id="IPR007289">
    <property type="entry name" value="JSRV_Vpu"/>
</dbReference>
<dbReference type="Pfam" id="PF04160">
    <property type="entry name" value="Borrelia_orfX"/>
    <property type="match status" value="1"/>
</dbReference>
<proteinExistence type="predicted"/>
<accession>P31624</accession>
<name>VPU_JSRV</name>
<sequence length="166" mass="19356">MQPENPMIYITKIVILYACNLKFPVKLHGKLLNLALLVLNSLFSLNMVSTLEVYALITSGKQMLLTFLNLGVLNMFMFLLTLFPIFSWLPFTLENQHVTVFNICCFAFLLQESHKPLKQIMDLVILAVLFNVFVFLSKFIIKQEFLIIHRDKVLWNEPINELNINY</sequence>
<gene>
    <name type="primary">vpu</name>
</gene>
<protein>
    <recommendedName>
        <fullName>Protein Vpu</fullName>
    </recommendedName>
    <alternativeName>
        <fullName>ORF-X protein</fullName>
    </alternativeName>
</protein>